<protein>
    <recommendedName>
        <fullName>Claudin-3</fullName>
    </recommendedName>
    <alternativeName>
        <fullName>Clostridium perfringens enterotoxin receptor 2</fullName>
        <shortName>CPE-R 2</shortName>
        <shortName>CPE-receptor 2</shortName>
    </alternativeName>
    <alternativeName>
        <fullName>Rat ventral prostate.1 protein homolog</fullName>
        <shortName>hRVP1</shortName>
    </alternativeName>
</protein>
<keyword id="KW-0965">Cell junction</keyword>
<keyword id="KW-1003">Cell membrane</keyword>
<keyword id="KW-0472">Membrane</keyword>
<keyword id="KW-0597">Phosphoprotein</keyword>
<keyword id="KW-1267">Proteomics identification</keyword>
<keyword id="KW-1185">Reference proteome</keyword>
<keyword id="KW-0796">Tight junction</keyword>
<keyword id="KW-0812">Transmembrane</keyword>
<keyword id="KW-1133">Transmembrane helix</keyword>
<keyword id="KW-0856">Williams-Beuren syndrome</keyword>
<name>CLD3_HUMAN</name>
<gene>
    <name type="primary">CLDN3</name>
    <name type="synonym">C7orf1</name>
    <name type="synonym">CPETR2</name>
</gene>
<evidence type="ECO:0000250" key="1"/>
<evidence type="ECO:0000250" key="2">
    <source>
        <dbReference type="UniProtKB" id="Q63400"/>
    </source>
</evidence>
<evidence type="ECO:0000250" key="3">
    <source>
        <dbReference type="UniProtKB" id="Q9Z0G9"/>
    </source>
</evidence>
<evidence type="ECO:0000255" key="4"/>
<evidence type="ECO:0000269" key="5">
    <source>
    </source>
</evidence>
<evidence type="ECO:0000269" key="6">
    <source>
    </source>
</evidence>
<evidence type="ECO:0000269" key="7">
    <source>
    </source>
</evidence>
<evidence type="ECO:0000305" key="8"/>
<evidence type="ECO:0007744" key="9">
    <source>
    </source>
</evidence>
<organism>
    <name type="scientific">Homo sapiens</name>
    <name type="common">Human</name>
    <dbReference type="NCBI Taxonomy" id="9606"/>
    <lineage>
        <taxon>Eukaryota</taxon>
        <taxon>Metazoa</taxon>
        <taxon>Chordata</taxon>
        <taxon>Craniata</taxon>
        <taxon>Vertebrata</taxon>
        <taxon>Euteleostomi</taxon>
        <taxon>Mammalia</taxon>
        <taxon>Eutheria</taxon>
        <taxon>Euarchontoglires</taxon>
        <taxon>Primates</taxon>
        <taxon>Haplorrhini</taxon>
        <taxon>Catarrhini</taxon>
        <taxon>Hominidae</taxon>
        <taxon>Homo</taxon>
    </lineage>
</organism>
<reference key="1">
    <citation type="journal article" date="1997" name="Genomics">
        <title>Analysis of a human gene homologous to rat ventral prostate.1 protein.</title>
        <authorList>
            <person name="Peacock R.E."/>
            <person name="Keen T.J."/>
            <person name="Inglehearn C.F."/>
        </authorList>
    </citation>
    <scope>NUCLEOTIDE SEQUENCE [GENOMIC DNA]</scope>
</reference>
<reference key="2">
    <citation type="journal article" date="1997" name="J. Biol. Chem.">
        <title>Clostridium perfringens enterotoxin utilizes two structurally related membrane proteins as functional receptors in vivo.</title>
        <authorList>
            <person name="Katahira J."/>
            <person name="Sugiyama H."/>
            <person name="Inoue N."/>
            <person name="Horiguchi Y."/>
            <person name="Matsuda M."/>
            <person name="Sugimoto N."/>
        </authorList>
    </citation>
    <scope>NUCLEOTIDE SEQUENCE [MRNA]</scope>
</reference>
<reference key="3">
    <citation type="journal article" date="2004" name="Genome Res.">
        <title>The status, quality, and expansion of the NIH full-length cDNA project: the Mammalian Gene Collection (MGC).</title>
        <authorList>
            <consortium name="The MGC Project Team"/>
        </authorList>
    </citation>
    <scope>NUCLEOTIDE SEQUENCE [LARGE SCALE MRNA]</scope>
    <source>
        <tissue>Colon</tissue>
    </source>
</reference>
<reference key="4">
    <citation type="journal article" date="2014" name="J. Proteomics">
        <title>An enzyme assisted RP-RPLC approach for in-depth analysis of human liver phosphoproteome.</title>
        <authorList>
            <person name="Bian Y."/>
            <person name="Song C."/>
            <person name="Cheng K."/>
            <person name="Dong M."/>
            <person name="Wang F."/>
            <person name="Huang J."/>
            <person name="Sun D."/>
            <person name="Wang L."/>
            <person name="Ye M."/>
            <person name="Zou H."/>
        </authorList>
    </citation>
    <scope>PHOSPHORYLATION [LARGE SCALE ANALYSIS] AT SER-209</scope>
    <scope>IDENTIFICATION BY MASS SPECTROMETRY [LARGE SCALE ANALYSIS]</scope>
    <source>
        <tissue>Liver</tissue>
    </source>
</reference>
<reference key="5">
    <citation type="journal article" date="2017" name="Proc. Natl. Acad. Sci. U.S.A.">
        <title>Mosaic expression of claudins in thick ascending limbs of Henle results in spatial separation of paracellular Na+ and Mg2+ transport.</title>
        <authorList>
            <person name="Milatz S."/>
            <person name="Himmerkus N."/>
            <person name="Wulfmeyer V.C."/>
            <person name="Drewell H."/>
            <person name="Mutig K."/>
            <person name="Hou J."/>
            <person name="Breiderhoff T."/>
            <person name="Mueller D."/>
            <person name="Fromm M."/>
            <person name="Bleich M."/>
            <person name="Guenzel D."/>
        </authorList>
    </citation>
    <scope>SUBUNIT</scope>
    <scope>INTERACTION WITH CLDN19</scope>
    <scope>SUBCELLULAR LOCATION</scope>
</reference>
<reference key="6">
    <citation type="journal article" date="2019" name="Cell. Mol. Life Sci.">
        <title>Tight junction proteins at the blood-brain barrier: far more than claudin-5.</title>
        <authorList>
            <person name="Berndt P."/>
            <person name="Winkler L."/>
            <person name="Cording J."/>
            <person name="Breitkreuz-Korff O."/>
            <person name="Rex A."/>
            <person name="Dithmer S."/>
            <person name="Rausch V."/>
            <person name="Blasig R."/>
            <person name="Richter M."/>
            <person name="Sporbert A."/>
            <person name="Wolburg H."/>
            <person name="Blasig I.E."/>
            <person name="Haseloff R.F."/>
        </authorList>
    </citation>
    <scope>SUBCELLULAR LOCATION</scope>
</reference>
<reference key="7">
    <citation type="journal article" date="2022" name="Nat. Commun.">
        <title>Nanoscale segregation of channel and barrier claudins enables paracellular ion flux.</title>
        <authorList>
            <person name="Gonschior H."/>
            <person name="Schmied C."/>
            <person name="Van der Veen R.E."/>
            <person name="Eichhorst J."/>
            <person name="Himmerkus N."/>
            <person name="Piontek J."/>
            <person name="Guenzel D."/>
            <person name="Bleich M."/>
            <person name="Furuse M."/>
            <person name="Haucke V."/>
            <person name="Lehmann M."/>
        </authorList>
    </citation>
    <scope>FUNCTION</scope>
    <scope>SUBUNIT</scope>
    <scope>INTERACTION WITH CLDN2</scope>
</reference>
<feature type="chain" id="PRO_0000144738" description="Claudin-3">
    <location>
        <begin position="1"/>
        <end position="220"/>
    </location>
</feature>
<feature type="topological domain" description="Cytoplasmic" evidence="4">
    <location>
        <begin position="1"/>
        <end position="8"/>
    </location>
</feature>
<feature type="transmembrane region" description="Helical" evidence="4">
    <location>
        <begin position="9"/>
        <end position="29"/>
    </location>
</feature>
<feature type="topological domain" description="Extracellular" evidence="4">
    <location>
        <begin position="30"/>
        <end position="80"/>
    </location>
</feature>
<feature type="transmembrane region" description="Helical" evidence="4">
    <location>
        <begin position="81"/>
        <end position="101"/>
    </location>
</feature>
<feature type="topological domain" description="Cytoplasmic" evidence="4">
    <location>
        <begin position="102"/>
        <end position="115"/>
    </location>
</feature>
<feature type="transmembrane region" description="Helical" evidence="4">
    <location>
        <begin position="116"/>
        <end position="136"/>
    </location>
</feature>
<feature type="topological domain" description="Extracellular" evidence="4">
    <location>
        <begin position="137"/>
        <end position="159"/>
    </location>
</feature>
<feature type="transmembrane region" description="Helical" evidence="4">
    <location>
        <begin position="160"/>
        <end position="180"/>
    </location>
</feature>
<feature type="topological domain" description="Cytoplasmic" evidence="4">
    <location>
        <begin position="181"/>
        <end position="220"/>
    </location>
</feature>
<feature type="region of interest" description="Interactions with TJP1, TJP2 and TJP3" evidence="1">
    <location>
        <begin position="219"/>
        <end position="220"/>
    </location>
</feature>
<feature type="modified residue" description="Phosphotyrosine" evidence="3">
    <location>
        <position position="198"/>
    </location>
</feature>
<feature type="modified residue" description="Phosphoserine" evidence="2">
    <location>
        <position position="199"/>
    </location>
</feature>
<feature type="modified residue" description="Phosphoserine" evidence="9">
    <location>
        <position position="209"/>
    </location>
</feature>
<comment type="function">
    <text evidence="7">Barrier-forming claudin. Plays a major role in tight junction-specific obliteration of the intercellular space, through calcium-independent cell-adhesion activity.</text>
</comment>
<comment type="subunit">
    <text evidence="3 5 7">Can form homo- and heteropolymers with other CLDN. Homopolymers interact with CLDN1 and CLDN2 homopolymers. Interacts in cis (within the same plasma membrane) with CLDN19 (PubMed:28028216, PubMed:36008380). Directly interacts with TJP1/ZO-1, TJP2/ZO-2 and TJP3/ZO-3 (By similarity).</text>
</comment>
<comment type="subcellular location">
    <subcellularLocation>
        <location evidence="5 6">Cell junction</location>
        <location evidence="5 6">Tight junction</location>
    </subcellularLocation>
    <subcellularLocation>
        <location evidence="5">Cell membrane</location>
        <topology evidence="4">Multi-pass membrane protein</topology>
    </subcellularLocation>
</comment>
<comment type="disease">
    <text>CLDN3 is located in the Williams-Beuren syndrome (WBS) critical region. WBS results from a hemizygous deletion of several genes on chromosome 7q11.23, thought to arise as a consequence of unequal crossing over between highly homologous low-copy repeat sequences flanking the deleted region.</text>
</comment>
<comment type="similarity">
    <text evidence="8">Belongs to the claudin family.</text>
</comment>
<sequence>MSMGLEITGTALAVLGWLGTIVCCALPMWRVSAFIGSNIITSQNIWEGLWMNCVVQSTGQMQCKVYDSLLALPQDLQAARALIVVAILLAAFGLLVALVGAQCTNCVQDDTAKAKITIVAGVLFLLAALLTLVPVSWSANTIIRDFYNPVVPEAQKREMGAGLYVGWAAAALQLLGGALLCCSCPPREKKYTATKVVYSAPRSTGPGASLGTGYDRKDYV</sequence>
<proteinExistence type="evidence at protein level"/>
<accession>O15551</accession>
<dbReference type="EMBL" id="AF007189">
    <property type="protein sequence ID" value="AAC78277.1"/>
    <property type="molecule type" value="Genomic_DNA"/>
</dbReference>
<dbReference type="EMBL" id="AB000714">
    <property type="protein sequence ID" value="BAA22986.1"/>
    <property type="molecule type" value="mRNA"/>
</dbReference>
<dbReference type="EMBL" id="BC016056">
    <property type="protein sequence ID" value="AAH16056.1"/>
    <property type="molecule type" value="mRNA"/>
</dbReference>
<dbReference type="CCDS" id="CCDS5559.1"/>
<dbReference type="RefSeq" id="NP_001297.1">
    <property type="nucleotide sequence ID" value="NM_001306.4"/>
</dbReference>
<dbReference type="SMR" id="O15551"/>
<dbReference type="BioGRID" id="107757">
    <property type="interactions" value="23"/>
</dbReference>
<dbReference type="DIP" id="DIP-61079N"/>
<dbReference type="FunCoup" id="O15551">
    <property type="interactions" value="384"/>
</dbReference>
<dbReference type="IntAct" id="O15551">
    <property type="interactions" value="8"/>
</dbReference>
<dbReference type="STRING" id="9606.ENSP00000378577"/>
<dbReference type="TCDB" id="1.H.1.1.15">
    <property type="family name" value="the claudin tight junction (claudin1) family"/>
</dbReference>
<dbReference type="iPTMnet" id="O15551"/>
<dbReference type="PhosphoSitePlus" id="O15551"/>
<dbReference type="SwissPalm" id="O15551"/>
<dbReference type="BioMuta" id="CLDN3"/>
<dbReference type="jPOST" id="O15551"/>
<dbReference type="MassIVE" id="O15551"/>
<dbReference type="PaxDb" id="9606-ENSP00000378577"/>
<dbReference type="PeptideAtlas" id="O15551"/>
<dbReference type="ProteomicsDB" id="48753"/>
<dbReference type="Pumba" id="O15551"/>
<dbReference type="ABCD" id="O15551">
    <property type="antibodies" value="6 sequenced antibodies"/>
</dbReference>
<dbReference type="Antibodypedia" id="3638">
    <property type="antibodies" value="607 antibodies from 40 providers"/>
</dbReference>
<dbReference type="DNASU" id="1365"/>
<dbReference type="Ensembl" id="ENST00000395145.3">
    <property type="protein sequence ID" value="ENSP00000378577.2"/>
    <property type="gene ID" value="ENSG00000165215.6"/>
</dbReference>
<dbReference type="GeneID" id="1365"/>
<dbReference type="KEGG" id="hsa:1365"/>
<dbReference type="MANE-Select" id="ENST00000395145.3">
    <property type="protein sequence ID" value="ENSP00000378577.2"/>
    <property type="RefSeq nucleotide sequence ID" value="NM_001306.4"/>
    <property type="RefSeq protein sequence ID" value="NP_001297.1"/>
</dbReference>
<dbReference type="AGR" id="HGNC:2045"/>
<dbReference type="CTD" id="1365"/>
<dbReference type="DisGeNET" id="1365"/>
<dbReference type="GeneCards" id="CLDN3"/>
<dbReference type="HGNC" id="HGNC:2045">
    <property type="gene designation" value="CLDN3"/>
</dbReference>
<dbReference type="HPA" id="ENSG00000165215">
    <property type="expression patterns" value="Tissue enhanced (intestine, thyroid gland)"/>
</dbReference>
<dbReference type="MIM" id="602910">
    <property type="type" value="gene"/>
</dbReference>
<dbReference type="neXtProt" id="NX_O15551"/>
<dbReference type="OpenTargets" id="ENSG00000165215"/>
<dbReference type="PharmGKB" id="PA26571"/>
<dbReference type="VEuPathDB" id="HostDB:ENSG00000165215"/>
<dbReference type="eggNOG" id="ENOG502QRZ8">
    <property type="taxonomic scope" value="Eukaryota"/>
</dbReference>
<dbReference type="GeneTree" id="ENSGT00940000162095"/>
<dbReference type="HOGENOM" id="CLU_076370_1_2_1"/>
<dbReference type="InParanoid" id="O15551"/>
<dbReference type="OMA" id="WLCSIIC"/>
<dbReference type="OrthoDB" id="9899584at2759"/>
<dbReference type="PAN-GO" id="O15551">
    <property type="GO annotations" value="4 GO annotations based on evolutionary models"/>
</dbReference>
<dbReference type="PhylomeDB" id="O15551"/>
<dbReference type="TreeFam" id="TF331936"/>
<dbReference type="PathwayCommons" id="O15551"/>
<dbReference type="Reactome" id="R-HSA-420029">
    <property type="pathway name" value="Tight junction interactions"/>
</dbReference>
<dbReference type="SignaLink" id="O15551"/>
<dbReference type="SIGNOR" id="O15551"/>
<dbReference type="BioGRID-ORCS" id="1365">
    <property type="hits" value="15 hits in 1141 CRISPR screens"/>
</dbReference>
<dbReference type="GeneWiki" id="CLDN3"/>
<dbReference type="GenomeRNAi" id="1365"/>
<dbReference type="Pharos" id="O15551">
    <property type="development level" value="Tbio"/>
</dbReference>
<dbReference type="PRO" id="PR:O15551"/>
<dbReference type="Proteomes" id="UP000005640">
    <property type="component" value="Chromosome 7"/>
</dbReference>
<dbReference type="RNAct" id="O15551">
    <property type="molecule type" value="protein"/>
</dbReference>
<dbReference type="Bgee" id="ENSG00000165215">
    <property type="expression patterns" value="Expressed in mucosa of transverse colon and 135 other cell types or tissues"/>
</dbReference>
<dbReference type="ExpressionAtlas" id="O15551">
    <property type="expression patterns" value="baseline and differential"/>
</dbReference>
<dbReference type="GO" id="GO:0043296">
    <property type="term" value="C:apical junction complex"/>
    <property type="evidence" value="ECO:0000315"/>
    <property type="project" value="ARUK-UCL"/>
</dbReference>
<dbReference type="GO" id="GO:0016327">
    <property type="term" value="C:apicolateral plasma membrane"/>
    <property type="evidence" value="ECO:0007669"/>
    <property type="project" value="Ensembl"/>
</dbReference>
<dbReference type="GO" id="GO:0005923">
    <property type="term" value="C:bicellular tight junction"/>
    <property type="evidence" value="ECO:0000314"/>
    <property type="project" value="UniProtKB"/>
</dbReference>
<dbReference type="GO" id="GO:0005911">
    <property type="term" value="C:cell-cell junction"/>
    <property type="evidence" value="ECO:0000314"/>
    <property type="project" value="ARUK-UCL"/>
</dbReference>
<dbReference type="GO" id="GO:0016328">
    <property type="term" value="C:lateral plasma membrane"/>
    <property type="evidence" value="ECO:0007669"/>
    <property type="project" value="Ensembl"/>
</dbReference>
<dbReference type="GO" id="GO:0016020">
    <property type="term" value="C:membrane"/>
    <property type="evidence" value="ECO:0000304"/>
    <property type="project" value="ProtInc"/>
</dbReference>
<dbReference type="GO" id="GO:0005886">
    <property type="term" value="C:plasma membrane"/>
    <property type="evidence" value="ECO:0000318"/>
    <property type="project" value="GO_Central"/>
</dbReference>
<dbReference type="GO" id="GO:0032991">
    <property type="term" value="C:protein-containing complex"/>
    <property type="evidence" value="ECO:0000314"/>
    <property type="project" value="UniProtKB"/>
</dbReference>
<dbReference type="GO" id="GO:0070160">
    <property type="term" value="C:tight junction"/>
    <property type="evidence" value="ECO:0000314"/>
    <property type="project" value="ARUK-UCL"/>
</dbReference>
<dbReference type="GO" id="GO:0098632">
    <property type="term" value="F:cell-cell adhesion mediator activity"/>
    <property type="evidence" value="ECO:0000314"/>
    <property type="project" value="ARUK-UCL"/>
</dbReference>
<dbReference type="GO" id="GO:0042802">
    <property type="term" value="F:identical protein binding"/>
    <property type="evidence" value="ECO:0000314"/>
    <property type="project" value="UniProtKB"/>
</dbReference>
<dbReference type="GO" id="GO:0005198">
    <property type="term" value="F:structural molecule activity"/>
    <property type="evidence" value="ECO:0000314"/>
    <property type="project" value="UniProt"/>
</dbReference>
<dbReference type="GO" id="GO:0004888">
    <property type="term" value="F:transmembrane signaling receptor activity"/>
    <property type="evidence" value="ECO:0000304"/>
    <property type="project" value="ProtInc"/>
</dbReference>
<dbReference type="GO" id="GO:0030036">
    <property type="term" value="P:actin cytoskeleton organization"/>
    <property type="evidence" value="ECO:0000315"/>
    <property type="project" value="ARUK-UCL"/>
</dbReference>
<dbReference type="GO" id="GO:0070830">
    <property type="term" value="P:bicellular tight junction assembly"/>
    <property type="evidence" value="ECO:0000315"/>
    <property type="project" value="UniProtKB"/>
</dbReference>
<dbReference type="GO" id="GO:0016338">
    <property type="term" value="P:calcium-independent cell-cell adhesion via plasma membrane cell-adhesion molecules"/>
    <property type="evidence" value="ECO:0007669"/>
    <property type="project" value="Ensembl"/>
</dbReference>
<dbReference type="GO" id="GO:0007155">
    <property type="term" value="P:cell adhesion"/>
    <property type="evidence" value="ECO:0000318"/>
    <property type="project" value="GO_Central"/>
</dbReference>
<dbReference type="GO" id="GO:0034329">
    <property type="term" value="P:cell junction assembly"/>
    <property type="evidence" value="ECO:0000315"/>
    <property type="project" value="ARUK-UCL"/>
</dbReference>
<dbReference type="GO" id="GO:0034331">
    <property type="term" value="P:cell junction maintenance"/>
    <property type="evidence" value="ECO:0000250"/>
    <property type="project" value="ARUK-UCL"/>
</dbReference>
<dbReference type="GO" id="GO:0045217">
    <property type="term" value="P:cell-cell junction maintenance"/>
    <property type="evidence" value="ECO:0000314"/>
    <property type="project" value="UniProt"/>
</dbReference>
<dbReference type="GO" id="GO:0003382">
    <property type="term" value="P:epithelial cell morphogenesis"/>
    <property type="evidence" value="ECO:0000250"/>
    <property type="project" value="UniProtKB"/>
</dbReference>
<dbReference type="GO" id="GO:0014045">
    <property type="term" value="P:establishment of endothelial blood-brain barrier"/>
    <property type="evidence" value="ECO:0000250"/>
    <property type="project" value="ARUK-UCL"/>
</dbReference>
<dbReference type="GO" id="GO:0035633">
    <property type="term" value="P:maintenance of blood-brain barrier"/>
    <property type="evidence" value="ECO:0000303"/>
    <property type="project" value="ARUK-UCL"/>
</dbReference>
<dbReference type="GO" id="GO:0030336">
    <property type="term" value="P:negative regulation of cell migration"/>
    <property type="evidence" value="ECO:0000315"/>
    <property type="project" value="ARUK-UCL"/>
</dbReference>
<dbReference type="GO" id="GO:0008285">
    <property type="term" value="P:negative regulation of cell population proliferation"/>
    <property type="evidence" value="ECO:0000315"/>
    <property type="project" value="ARUK-UCL"/>
</dbReference>
<dbReference type="GO" id="GO:0010629">
    <property type="term" value="P:negative regulation of gene expression"/>
    <property type="evidence" value="ECO:0000315"/>
    <property type="project" value="ARUK-UCL"/>
</dbReference>
<dbReference type="GO" id="GO:2000186">
    <property type="term" value="P:negative regulation of phosphate transmembrane transport"/>
    <property type="evidence" value="ECO:0000314"/>
    <property type="project" value="UniProt"/>
</dbReference>
<dbReference type="GO" id="GO:0030335">
    <property type="term" value="P:positive regulation of cell migration"/>
    <property type="evidence" value="ECO:0000315"/>
    <property type="project" value="ARUK-UCL"/>
</dbReference>
<dbReference type="GO" id="GO:0010628">
    <property type="term" value="P:positive regulation of gene expression"/>
    <property type="evidence" value="ECO:0000315"/>
    <property type="project" value="ARUK-UCL"/>
</dbReference>
<dbReference type="GO" id="GO:0090303">
    <property type="term" value="P:positive regulation of wound healing"/>
    <property type="evidence" value="ECO:0000315"/>
    <property type="project" value="ARUK-UCL"/>
</dbReference>
<dbReference type="GO" id="GO:0022604">
    <property type="term" value="P:regulation of cell morphogenesis"/>
    <property type="evidence" value="ECO:0000315"/>
    <property type="project" value="ARUK-UCL"/>
</dbReference>
<dbReference type="GO" id="GO:0090559">
    <property type="term" value="P:regulation of membrane permeability"/>
    <property type="evidence" value="ECO:0000315"/>
    <property type="project" value="ARUK-UCL"/>
</dbReference>
<dbReference type="GO" id="GO:0150111">
    <property type="term" value="P:regulation of transepithelial transport"/>
    <property type="evidence" value="ECO:0000315"/>
    <property type="project" value="ARUK-UCL"/>
</dbReference>
<dbReference type="GO" id="GO:0045471">
    <property type="term" value="P:response to ethanol"/>
    <property type="evidence" value="ECO:0007669"/>
    <property type="project" value="Ensembl"/>
</dbReference>
<dbReference type="GO" id="GO:0140459">
    <property type="term" value="P:response to Gram-positive bacterium"/>
    <property type="evidence" value="ECO:0007669"/>
    <property type="project" value="Ensembl"/>
</dbReference>
<dbReference type="GO" id="GO:0001666">
    <property type="term" value="P:response to hypoxia"/>
    <property type="evidence" value="ECO:0000270"/>
    <property type="project" value="UniProtKB"/>
</dbReference>
<dbReference type="GO" id="GO:0003406">
    <property type="term" value="P:retinal pigment epithelium development"/>
    <property type="evidence" value="ECO:0000315"/>
    <property type="project" value="ARUK-UCL"/>
</dbReference>
<dbReference type="FunFam" id="1.20.140.150:FF:000001">
    <property type="entry name" value="Claudin"/>
    <property type="match status" value="1"/>
</dbReference>
<dbReference type="Gene3D" id="1.20.140.150">
    <property type="match status" value="1"/>
</dbReference>
<dbReference type="InterPro" id="IPR006187">
    <property type="entry name" value="Claudin"/>
</dbReference>
<dbReference type="InterPro" id="IPR003549">
    <property type="entry name" value="Claudin3"/>
</dbReference>
<dbReference type="InterPro" id="IPR017974">
    <property type="entry name" value="Claudin_CS"/>
</dbReference>
<dbReference type="InterPro" id="IPR004031">
    <property type="entry name" value="PMP22/EMP/MP20/Claudin"/>
</dbReference>
<dbReference type="PANTHER" id="PTHR12002">
    <property type="entry name" value="CLAUDIN"/>
    <property type="match status" value="1"/>
</dbReference>
<dbReference type="Pfam" id="PF00822">
    <property type="entry name" value="PMP22_Claudin"/>
    <property type="match status" value="1"/>
</dbReference>
<dbReference type="PRINTS" id="PR01077">
    <property type="entry name" value="CLAUDIN"/>
</dbReference>
<dbReference type="PRINTS" id="PR01378">
    <property type="entry name" value="CLAUDIN3"/>
</dbReference>
<dbReference type="PROSITE" id="PS01346">
    <property type="entry name" value="CLAUDIN"/>
    <property type="match status" value="1"/>
</dbReference>